<name>TRPE_METTM</name>
<comment type="function">
    <text evidence="1">Part of a heterotetrameric complex that catalyzes the two-step biosynthesis of anthranilate, an intermediate in the biosynthesis of L-tryptophan. In the first step, the glutamine-binding beta subunit (TrpG) of anthranilate synthase (AS) provides the glutamine amidotransferase activity which generates ammonia as a substrate that, along with chorismate, is used in the second step, catalyzed by the large alpha subunit of AS (TrpE) to produce anthranilate. In the absence of TrpG, TrpE can synthesize anthranilate directly from chorismate and high concentrations of ammonia (By similarity).</text>
</comment>
<comment type="catalytic activity">
    <reaction>
        <text>chorismate + L-glutamine = anthranilate + pyruvate + L-glutamate + H(+)</text>
        <dbReference type="Rhea" id="RHEA:21732"/>
        <dbReference type="ChEBI" id="CHEBI:15361"/>
        <dbReference type="ChEBI" id="CHEBI:15378"/>
        <dbReference type="ChEBI" id="CHEBI:16567"/>
        <dbReference type="ChEBI" id="CHEBI:29748"/>
        <dbReference type="ChEBI" id="CHEBI:29985"/>
        <dbReference type="ChEBI" id="CHEBI:58359"/>
        <dbReference type="EC" id="4.1.3.27"/>
    </reaction>
</comment>
<comment type="cofactor">
    <cofactor evidence="2">
        <name>Mg(2+)</name>
        <dbReference type="ChEBI" id="CHEBI:18420"/>
    </cofactor>
    <text evidence="2">Binds 1 Mg(2+) ion per subunit.</text>
</comment>
<comment type="activity regulation">
    <text evidence="1">Feedback inhibited by tryptophan.</text>
</comment>
<comment type="pathway">
    <text>Amino-acid biosynthesis; L-tryptophan biosynthesis; L-tryptophan from chorismate: step 1/5.</text>
</comment>
<comment type="subunit">
    <text evidence="1">Heterotetramer consisting of two non-identical subunits: a beta subunit (TrpG) and a large alpha subunit (TrpE).</text>
</comment>
<comment type="similarity">
    <text evidence="3">Belongs to the anthranilate synthase component I family.</text>
</comment>
<feature type="chain" id="PRO_0000154130" description="Anthranilate synthase component 1">
    <location>
        <begin position="1"/>
        <end position="461"/>
    </location>
</feature>
<feature type="binding site" evidence="2">
    <location>
        <position position="43"/>
    </location>
    <ligand>
        <name>L-tryptophan</name>
        <dbReference type="ChEBI" id="CHEBI:57912"/>
    </ligand>
</feature>
<feature type="binding site" evidence="2">
    <location>
        <begin position="238"/>
        <end position="240"/>
    </location>
    <ligand>
        <name>L-tryptophan</name>
        <dbReference type="ChEBI" id="CHEBI:57912"/>
    </ligand>
</feature>
<feature type="binding site" evidence="2">
    <location>
        <begin position="273"/>
        <end position="274"/>
    </location>
    <ligand>
        <name>chorismate</name>
        <dbReference type="ChEBI" id="CHEBI:29748"/>
    </ligand>
</feature>
<feature type="binding site" evidence="2">
    <location>
        <position position="300"/>
    </location>
    <ligand>
        <name>Mg(2+)</name>
        <dbReference type="ChEBI" id="CHEBI:18420"/>
    </ligand>
</feature>
<feature type="binding site" evidence="2">
    <location>
        <position position="388"/>
    </location>
    <ligand>
        <name>chorismate</name>
        <dbReference type="ChEBI" id="CHEBI:29748"/>
    </ligand>
</feature>
<feature type="binding site" evidence="2">
    <location>
        <position position="408"/>
    </location>
    <ligand>
        <name>chorismate</name>
        <dbReference type="ChEBI" id="CHEBI:29748"/>
    </ligand>
</feature>
<feature type="binding site" evidence="2">
    <location>
        <begin position="422"/>
        <end position="424"/>
    </location>
    <ligand>
        <name>chorismate</name>
        <dbReference type="ChEBI" id="CHEBI:29748"/>
    </ligand>
</feature>
<feature type="binding site" evidence="2">
    <location>
        <position position="424"/>
    </location>
    <ligand>
        <name>chorismate</name>
        <dbReference type="ChEBI" id="CHEBI:29748"/>
    </ligand>
</feature>
<feature type="binding site" evidence="2">
    <location>
        <position position="437"/>
    </location>
    <ligand>
        <name>Mg(2+)</name>
        <dbReference type="ChEBI" id="CHEBI:18420"/>
    </ligand>
</feature>
<feature type="sequence conflict" description="In Ref. 1; AAA73028." evidence="3" ref="1">
    <original>G</original>
    <variation>K</variation>
    <location>
        <position position="7"/>
    </location>
</feature>
<feature type="sequence conflict" description="In Ref. 1; AAA73028." evidence="3" ref="1">
    <original>E</original>
    <variation>EQ</variation>
    <location>
        <position position="297"/>
    </location>
</feature>
<feature type="sequence conflict" description="In Ref. 1; AAA73028." evidence="3" ref="1">
    <original>D</original>
    <variation>Y</variation>
    <location>
        <position position="459"/>
    </location>
</feature>
<gene>
    <name type="primary">trpE</name>
    <name type="ordered locus">MTBMA_c02340</name>
</gene>
<protein>
    <recommendedName>
        <fullName>Anthranilate synthase component 1</fullName>
        <shortName>AS</shortName>
        <shortName>ASI</shortName>
        <ecNumber>4.1.3.27</ecNumber>
    </recommendedName>
</protein>
<accession>P26940</accession>
<accession>D9PUE5</accession>
<evidence type="ECO:0000250" key="1"/>
<evidence type="ECO:0000250" key="2">
    <source>
        <dbReference type="UniProtKB" id="P00897"/>
    </source>
</evidence>
<evidence type="ECO:0000305" key="3"/>
<sequence>MGVNVFGIINLEKPRKEKLEFREPFEVFKSIYSEYESSFLLESMESDTGLARYSFIGFEPEMIIRAREGVIEIDDGDSREEFDSKNPFEDLRGFLKMEKNSGGFCGGLVGYISYQAARFFDTIRLSEGDFPDFEFGLFLDGIMFNHLTGECSYISRHGNRLPDISPLLGDEVPTGTLGYRRERTLLSKRRYMDMVLEAKERIREGEIFQAVLSSATDYRLRGDRLAFYESLRRINPSPYMYHLKLGEREITGSSPEMLVRVEDRRIETFPIAGTRPRGRTEEEDGVIASDLLSDEKELAEHLMLVDLARNDIGRVSEFGSVEVPEYMTIKRFSHVQHILSHVTGKLRDGMDAVDALGAVFPAGTVSGAPKIRAMEIIESLEGVPRNAYAGALGYLSLNGNADFAITIRSMVCQGKTGRIQAGAGIVHDSIPEMEYLECQNKARALLKSMEMAGEQVDPDNR</sequence>
<proteinExistence type="inferred from homology"/>
<organism>
    <name type="scientific">Methanothermobacter marburgensis (strain ATCC BAA-927 / DSM 2133 / JCM 14651 / NBRC 100331 / OCM 82 / Marburg)</name>
    <name type="common">Methanobacterium thermoautotrophicum</name>
    <dbReference type="NCBI Taxonomy" id="79929"/>
    <lineage>
        <taxon>Archaea</taxon>
        <taxon>Methanobacteriati</taxon>
        <taxon>Methanobacteriota</taxon>
        <taxon>Methanomada group</taxon>
        <taxon>Methanobacteria</taxon>
        <taxon>Methanobacteriales</taxon>
        <taxon>Methanobacteriaceae</taxon>
        <taxon>Methanothermobacter</taxon>
    </lineage>
</organism>
<dbReference type="EC" id="4.1.3.27"/>
<dbReference type="EMBL" id="M65060">
    <property type="protein sequence ID" value="AAA73028.1"/>
    <property type="molecule type" value="Genomic_DNA"/>
</dbReference>
<dbReference type="EMBL" id="CP001710">
    <property type="protein sequence ID" value="ADL57843.1"/>
    <property type="molecule type" value="Genomic_DNA"/>
</dbReference>
<dbReference type="RefSeq" id="WP_013295070.1">
    <property type="nucleotide sequence ID" value="NC_014408.1"/>
</dbReference>
<dbReference type="SMR" id="P26940"/>
<dbReference type="STRING" id="79929.MTBMA_c02340"/>
<dbReference type="PaxDb" id="79929-MTBMA_c02340"/>
<dbReference type="GeneID" id="92394651"/>
<dbReference type="GeneID" id="9703940"/>
<dbReference type="KEGG" id="mmg:MTBMA_c02340"/>
<dbReference type="PATRIC" id="fig|79929.8.peg.230"/>
<dbReference type="HOGENOM" id="CLU_006493_9_3_2"/>
<dbReference type="OrthoDB" id="25514at2157"/>
<dbReference type="UniPathway" id="UPA00035">
    <property type="reaction ID" value="UER00040"/>
</dbReference>
<dbReference type="Proteomes" id="UP000000345">
    <property type="component" value="Chromosome"/>
</dbReference>
<dbReference type="GO" id="GO:0004049">
    <property type="term" value="F:anthranilate synthase activity"/>
    <property type="evidence" value="ECO:0007669"/>
    <property type="project" value="UniProtKB-EC"/>
</dbReference>
<dbReference type="GO" id="GO:0046872">
    <property type="term" value="F:metal ion binding"/>
    <property type="evidence" value="ECO:0007669"/>
    <property type="project" value="UniProtKB-KW"/>
</dbReference>
<dbReference type="GO" id="GO:0000162">
    <property type="term" value="P:L-tryptophan biosynthetic process"/>
    <property type="evidence" value="ECO:0007669"/>
    <property type="project" value="UniProtKB-UniPathway"/>
</dbReference>
<dbReference type="Gene3D" id="3.60.120.10">
    <property type="entry name" value="Anthranilate synthase"/>
    <property type="match status" value="1"/>
</dbReference>
<dbReference type="InterPro" id="IPR005801">
    <property type="entry name" value="ADC_synthase"/>
</dbReference>
<dbReference type="InterPro" id="IPR019999">
    <property type="entry name" value="Anth_synth_I-like"/>
</dbReference>
<dbReference type="InterPro" id="IPR006805">
    <property type="entry name" value="Anth_synth_I_N"/>
</dbReference>
<dbReference type="InterPro" id="IPR010116">
    <property type="entry name" value="Anthranilate_synth_I_arc_typ"/>
</dbReference>
<dbReference type="InterPro" id="IPR015890">
    <property type="entry name" value="Chorismate_C"/>
</dbReference>
<dbReference type="NCBIfam" id="TIGR01820">
    <property type="entry name" value="TrpE-arch"/>
    <property type="match status" value="1"/>
</dbReference>
<dbReference type="PANTHER" id="PTHR11236">
    <property type="entry name" value="AMINOBENZOATE/ANTHRANILATE SYNTHASE"/>
    <property type="match status" value="1"/>
</dbReference>
<dbReference type="PANTHER" id="PTHR11236:SF9">
    <property type="entry name" value="ANTHRANILATE SYNTHASE COMPONENT 1"/>
    <property type="match status" value="1"/>
</dbReference>
<dbReference type="Pfam" id="PF04715">
    <property type="entry name" value="Anth_synt_I_N"/>
    <property type="match status" value="1"/>
</dbReference>
<dbReference type="Pfam" id="PF00425">
    <property type="entry name" value="Chorismate_bind"/>
    <property type="match status" value="1"/>
</dbReference>
<dbReference type="PRINTS" id="PR00095">
    <property type="entry name" value="ANTSNTHASEI"/>
</dbReference>
<dbReference type="SUPFAM" id="SSF56322">
    <property type="entry name" value="ADC synthase"/>
    <property type="match status" value="1"/>
</dbReference>
<reference key="1">
    <citation type="journal article" date="1991" name="J. Bacteriol.">
        <title>Tryptophan gene cluster of Methanobacterium thermoautotrophicum Marburg: molecular cloning and nucleotide sequence of a putative trpEGCFBAD operon.</title>
        <authorList>
            <person name="Meile L."/>
            <person name="Stettler R."/>
            <person name="Banholzer R."/>
            <person name="Kotik M."/>
            <person name="Leisinger T."/>
        </authorList>
    </citation>
    <scope>NUCLEOTIDE SEQUENCE [GENOMIC DNA]</scope>
    <source>
        <strain>ATCC BAA-927 / DSM 2133 / JCM 14651 / NBRC 100331 / OCM 82 / Marburg</strain>
    </source>
</reference>
<reference key="2">
    <citation type="journal article" date="2010" name="J. Bacteriol.">
        <title>Complete genome sequence of Methanothermobacter marburgensis, a methanoarchaeon model organism.</title>
        <authorList>
            <person name="Liesegang H."/>
            <person name="Kaster A.K."/>
            <person name="Wiezer A."/>
            <person name="Goenrich M."/>
            <person name="Wollherr A."/>
            <person name="Seedorf H."/>
            <person name="Gottschalk G."/>
            <person name="Thauer R.K."/>
        </authorList>
    </citation>
    <scope>NUCLEOTIDE SEQUENCE [LARGE SCALE GENOMIC DNA]</scope>
    <source>
        <strain>ATCC BAA-927 / DSM 2133 / JCM 14651 / NBRC 100331 / OCM 82 / Marburg</strain>
    </source>
</reference>
<keyword id="KW-0028">Amino-acid biosynthesis</keyword>
<keyword id="KW-0057">Aromatic amino acid biosynthesis</keyword>
<keyword id="KW-0456">Lyase</keyword>
<keyword id="KW-0460">Magnesium</keyword>
<keyword id="KW-0479">Metal-binding</keyword>
<keyword id="KW-0822">Tryptophan biosynthesis</keyword>